<keyword id="KW-0320">Glycogen biosynthesis</keyword>
<keyword id="KW-0328">Glycosyltransferase</keyword>
<keyword id="KW-0808">Transferase</keyword>
<sequence length="477" mass="52946">MQVLHVCSEMFPLLKTGGLADVIGALPAAQIADGVDVRVLLPGFPDIRRGIPDAHVVSRRDTFAGKISLLFGHYNGVGIYLIDAPHLYERPGSPYHDTNLYAYTDNVLRFALLGWVGCEMACGLDPFWRPDVVHAHDWHAGLAPAYLAARGRPAKSVFTVHNLAYQGMFYAKHMDDIELPWSFFNMHGLEFNGQLSFLKAGLYYADHITAVSPTYAREITEPQFAYGMEGLLRQRHLEGRLSGILNGVDEKIWNPESDLLLASRYTRDTLEEKAENKRQLQIAMGLKVNDKVPLFAVVSRLTNQKGLDLVLEALPGLLEQGGQLALLGAGDPVLQEGFLAAAAEHPGQVGVQIGYHEAFSHRIMGGADVILVPSRFEPCGLTQLYGLKYGTLPLVRRTGGLADTVSDSSLENLADGIASGFVFEDSNAWSLLRAIRRAFVLWSRPSLWRFVQRQAMAMDFSWQVAAKSYRELYYRLK</sequence>
<proteinExistence type="inferred from homology"/>
<name>GLGA_SALNS</name>
<gene>
    <name evidence="1" type="primary">glgA</name>
    <name type="ordered locus">SNSL254_A3802</name>
</gene>
<evidence type="ECO:0000255" key="1">
    <source>
        <dbReference type="HAMAP-Rule" id="MF_00484"/>
    </source>
</evidence>
<organism>
    <name type="scientific">Salmonella newport (strain SL254)</name>
    <dbReference type="NCBI Taxonomy" id="423368"/>
    <lineage>
        <taxon>Bacteria</taxon>
        <taxon>Pseudomonadati</taxon>
        <taxon>Pseudomonadota</taxon>
        <taxon>Gammaproteobacteria</taxon>
        <taxon>Enterobacterales</taxon>
        <taxon>Enterobacteriaceae</taxon>
        <taxon>Salmonella</taxon>
    </lineage>
</organism>
<reference key="1">
    <citation type="journal article" date="2011" name="J. Bacteriol.">
        <title>Comparative genomics of 28 Salmonella enterica isolates: evidence for CRISPR-mediated adaptive sublineage evolution.</title>
        <authorList>
            <person name="Fricke W.F."/>
            <person name="Mammel M.K."/>
            <person name="McDermott P.F."/>
            <person name="Tartera C."/>
            <person name="White D.G."/>
            <person name="Leclerc J.E."/>
            <person name="Ravel J."/>
            <person name="Cebula T.A."/>
        </authorList>
    </citation>
    <scope>NUCLEOTIDE SEQUENCE [LARGE SCALE GENOMIC DNA]</scope>
    <source>
        <strain>SL254</strain>
    </source>
</reference>
<protein>
    <recommendedName>
        <fullName evidence="1">Glycogen synthase</fullName>
        <ecNumber evidence="1">2.4.1.21</ecNumber>
    </recommendedName>
    <alternativeName>
        <fullName evidence="1">Starch [bacterial glycogen] synthase</fullName>
    </alternativeName>
</protein>
<dbReference type="EC" id="2.4.1.21" evidence="1"/>
<dbReference type="EMBL" id="CP001113">
    <property type="protein sequence ID" value="ACF64444.1"/>
    <property type="molecule type" value="Genomic_DNA"/>
</dbReference>
<dbReference type="RefSeq" id="WP_001197669.1">
    <property type="nucleotide sequence ID" value="NZ_CCMR01000004.1"/>
</dbReference>
<dbReference type="SMR" id="B4SVN2"/>
<dbReference type="CAZy" id="GT5">
    <property type="family name" value="Glycosyltransferase Family 5"/>
</dbReference>
<dbReference type="KEGG" id="see:SNSL254_A3802"/>
<dbReference type="HOGENOM" id="CLU_009583_18_4_6"/>
<dbReference type="UniPathway" id="UPA00164"/>
<dbReference type="Proteomes" id="UP000008824">
    <property type="component" value="Chromosome"/>
</dbReference>
<dbReference type="GO" id="GO:0005829">
    <property type="term" value="C:cytosol"/>
    <property type="evidence" value="ECO:0007669"/>
    <property type="project" value="TreeGrafter"/>
</dbReference>
<dbReference type="GO" id="GO:0009011">
    <property type="term" value="F:alpha-1,4-glucan glucosyltransferase (ADP-glucose donor) activity"/>
    <property type="evidence" value="ECO:0007669"/>
    <property type="project" value="UniProtKB-UniRule"/>
</dbReference>
<dbReference type="GO" id="GO:0004373">
    <property type="term" value="F:alpha-1,4-glucan glucosyltransferase (UDP-glucose donor) activity"/>
    <property type="evidence" value="ECO:0007669"/>
    <property type="project" value="InterPro"/>
</dbReference>
<dbReference type="GO" id="GO:0005978">
    <property type="term" value="P:glycogen biosynthetic process"/>
    <property type="evidence" value="ECO:0007669"/>
    <property type="project" value="UniProtKB-UniRule"/>
</dbReference>
<dbReference type="CDD" id="cd03791">
    <property type="entry name" value="GT5_Glycogen_synthase_DULL1-like"/>
    <property type="match status" value="1"/>
</dbReference>
<dbReference type="FunFam" id="3.40.50.2000:FF:000008">
    <property type="entry name" value="Glycogen synthase"/>
    <property type="match status" value="1"/>
</dbReference>
<dbReference type="FunFam" id="3.40.50.2000:FF:000011">
    <property type="entry name" value="Glycogen synthase"/>
    <property type="match status" value="1"/>
</dbReference>
<dbReference type="Gene3D" id="3.40.50.2000">
    <property type="entry name" value="Glycogen Phosphorylase B"/>
    <property type="match status" value="2"/>
</dbReference>
<dbReference type="HAMAP" id="MF_00484">
    <property type="entry name" value="Glycogen_synth"/>
    <property type="match status" value="1"/>
</dbReference>
<dbReference type="InterPro" id="IPR001296">
    <property type="entry name" value="Glyco_trans_1"/>
</dbReference>
<dbReference type="InterPro" id="IPR011835">
    <property type="entry name" value="GS/SS"/>
</dbReference>
<dbReference type="InterPro" id="IPR013534">
    <property type="entry name" value="Starch_synth_cat_dom"/>
</dbReference>
<dbReference type="NCBIfam" id="TIGR02095">
    <property type="entry name" value="glgA"/>
    <property type="match status" value="1"/>
</dbReference>
<dbReference type="NCBIfam" id="NF001899">
    <property type="entry name" value="PRK00654.1-2"/>
    <property type="match status" value="1"/>
</dbReference>
<dbReference type="PANTHER" id="PTHR45825:SF11">
    <property type="entry name" value="ALPHA AMYLASE DOMAIN-CONTAINING PROTEIN"/>
    <property type="match status" value="1"/>
</dbReference>
<dbReference type="PANTHER" id="PTHR45825">
    <property type="entry name" value="GRANULE-BOUND STARCH SYNTHASE 1, CHLOROPLASTIC/AMYLOPLASTIC"/>
    <property type="match status" value="1"/>
</dbReference>
<dbReference type="Pfam" id="PF08323">
    <property type="entry name" value="Glyco_transf_5"/>
    <property type="match status" value="1"/>
</dbReference>
<dbReference type="Pfam" id="PF00534">
    <property type="entry name" value="Glycos_transf_1"/>
    <property type="match status" value="1"/>
</dbReference>
<dbReference type="SUPFAM" id="SSF53756">
    <property type="entry name" value="UDP-Glycosyltransferase/glycogen phosphorylase"/>
    <property type="match status" value="1"/>
</dbReference>
<comment type="function">
    <text evidence="1">Synthesizes alpha-1,4-glucan chains using ADP-glucose.</text>
</comment>
<comment type="catalytic activity">
    <reaction evidence="1">
        <text>[(1-&gt;4)-alpha-D-glucosyl](n) + ADP-alpha-D-glucose = [(1-&gt;4)-alpha-D-glucosyl](n+1) + ADP + H(+)</text>
        <dbReference type="Rhea" id="RHEA:18189"/>
        <dbReference type="Rhea" id="RHEA-COMP:9584"/>
        <dbReference type="Rhea" id="RHEA-COMP:9587"/>
        <dbReference type="ChEBI" id="CHEBI:15378"/>
        <dbReference type="ChEBI" id="CHEBI:15444"/>
        <dbReference type="ChEBI" id="CHEBI:57498"/>
        <dbReference type="ChEBI" id="CHEBI:456216"/>
        <dbReference type="EC" id="2.4.1.21"/>
    </reaction>
</comment>
<comment type="pathway">
    <text evidence="1">Glycan biosynthesis; glycogen biosynthesis.</text>
</comment>
<comment type="similarity">
    <text evidence="1">Belongs to the glycosyltransferase 1 family. Bacterial/plant glycogen synthase subfamily.</text>
</comment>
<accession>B4SVN2</accession>
<feature type="chain" id="PRO_1000126100" description="Glycogen synthase">
    <location>
        <begin position="1"/>
        <end position="477"/>
    </location>
</feature>
<feature type="binding site" evidence="1">
    <location>
        <position position="15"/>
    </location>
    <ligand>
        <name>ADP-alpha-D-glucose</name>
        <dbReference type="ChEBI" id="CHEBI:57498"/>
    </ligand>
</feature>